<accession>P72332</accession>
<feature type="chain" id="PRO_0000054735" description="Nodulation protein G">
    <location>
        <begin position="1"/>
        <end position="245"/>
    </location>
</feature>
<feature type="active site" description="Proton acceptor" evidence="2">
    <location>
        <position position="152"/>
    </location>
</feature>
<feature type="binding site" evidence="1">
    <location>
        <begin position="11"/>
        <end position="35"/>
    </location>
    <ligand>
        <name>NAD(+)</name>
        <dbReference type="ChEBI" id="CHEBI:57540"/>
    </ligand>
</feature>
<feature type="binding site" evidence="1">
    <location>
        <position position="139"/>
    </location>
    <ligand>
        <name>substrate</name>
    </ligand>
</feature>
<proteinExistence type="inferred from homology"/>
<evidence type="ECO:0000250" key="1"/>
<evidence type="ECO:0000255" key="2">
    <source>
        <dbReference type="PROSITE-ProRule" id="PRU10001"/>
    </source>
</evidence>
<evidence type="ECO:0000305" key="3"/>
<keyword id="KW-0520">NAD</keyword>
<keyword id="KW-0536">Nodulation</keyword>
<keyword id="KW-0560">Oxidoreductase</keyword>
<protein>
    <recommendedName>
        <fullName>Nodulation protein G</fullName>
    </recommendedName>
</protein>
<comment type="function">
    <text>Proposed to modify Nod factor fatty acyl chain.</text>
</comment>
<comment type="similarity">
    <text evidence="3">Belongs to the short-chain dehydrogenases/reductases (SDR) family.</text>
</comment>
<name>NODG_RHIS3</name>
<gene>
    <name type="primary">nodG</name>
</gene>
<reference key="1">
    <citation type="journal article" date="1997" name="Mol. Plant Microbe Interact.">
        <title>Sequence and mutational analysis of the 6.7-kb region containing nodAFEG genes of Rhizobium sp. strain N33: evidence of DNA rearrangements.</title>
        <authorList>
            <person name="Cloutier J."/>
            <person name="Laberge S."/>
            <person name="Antoun H."/>
        </authorList>
    </citation>
    <scope>NUCLEOTIDE SEQUENCE [GENOMIC DNA]</scope>
</reference>
<sequence length="245" mass="26047">MFELTGRKALVTGASGGIGEAIARVLHAQGAIVGLHGTRVEKLETLAAELGDRVKLFPANLSNRDEVKALGQKAEADLEGVDILVNNAGITKDGLFVRMSDADWDTVLEVNLTAVFRLTRELTHPMMRRRHGRIINITSVVGVTGNPGQTNYCASKAGMIGFSKSLAQEIATRNITVNCVAPGFIESAMTDKLNDKQKEAIMAAIPTRRMGTSVEVASAVAYLASNEAAYVTGQTIHVNGGLAMI</sequence>
<dbReference type="EMBL" id="U53327">
    <property type="protein sequence ID" value="AAB16895.1"/>
    <property type="molecule type" value="Genomic_DNA"/>
</dbReference>
<dbReference type="SMR" id="P72332"/>
<dbReference type="GO" id="GO:0004316">
    <property type="term" value="F:3-oxoacyl-[acyl-carrier-protein] reductase (NADPH) activity"/>
    <property type="evidence" value="ECO:0007669"/>
    <property type="project" value="InterPro"/>
</dbReference>
<dbReference type="GO" id="GO:0051287">
    <property type="term" value="F:NAD binding"/>
    <property type="evidence" value="ECO:0007669"/>
    <property type="project" value="InterPro"/>
</dbReference>
<dbReference type="GO" id="GO:0006633">
    <property type="term" value="P:fatty acid biosynthetic process"/>
    <property type="evidence" value="ECO:0007669"/>
    <property type="project" value="InterPro"/>
</dbReference>
<dbReference type="CDD" id="cd05333">
    <property type="entry name" value="BKR_SDR_c"/>
    <property type="match status" value="1"/>
</dbReference>
<dbReference type="FunFam" id="3.40.50.720:FF:000173">
    <property type="entry name" value="3-oxoacyl-[acyl-carrier protein] reductase"/>
    <property type="match status" value="1"/>
</dbReference>
<dbReference type="Gene3D" id="3.40.50.720">
    <property type="entry name" value="NAD(P)-binding Rossmann-like Domain"/>
    <property type="match status" value="1"/>
</dbReference>
<dbReference type="InterPro" id="IPR011284">
    <property type="entry name" value="3oxo_ACP_reduc"/>
</dbReference>
<dbReference type="InterPro" id="IPR036291">
    <property type="entry name" value="NAD(P)-bd_dom_sf"/>
</dbReference>
<dbReference type="InterPro" id="IPR020904">
    <property type="entry name" value="Sc_DH/Rdtase_CS"/>
</dbReference>
<dbReference type="InterPro" id="IPR050259">
    <property type="entry name" value="SDR"/>
</dbReference>
<dbReference type="InterPro" id="IPR002347">
    <property type="entry name" value="SDR_fam"/>
</dbReference>
<dbReference type="NCBIfam" id="TIGR01830">
    <property type="entry name" value="3oxo_ACP_reduc"/>
    <property type="match status" value="1"/>
</dbReference>
<dbReference type="NCBIfam" id="NF005559">
    <property type="entry name" value="PRK07231.1"/>
    <property type="match status" value="1"/>
</dbReference>
<dbReference type="NCBIfam" id="NF009466">
    <property type="entry name" value="PRK12826.1-2"/>
    <property type="match status" value="1"/>
</dbReference>
<dbReference type="NCBIfam" id="NF009547">
    <property type="entry name" value="PRK12936.1"/>
    <property type="match status" value="1"/>
</dbReference>
<dbReference type="PANTHER" id="PTHR42879">
    <property type="entry name" value="3-OXOACYL-(ACYL-CARRIER-PROTEIN) REDUCTASE"/>
    <property type="match status" value="1"/>
</dbReference>
<dbReference type="PANTHER" id="PTHR42879:SF2">
    <property type="entry name" value="3-OXOACYL-[ACYL-CARRIER-PROTEIN] REDUCTASE FABG"/>
    <property type="match status" value="1"/>
</dbReference>
<dbReference type="Pfam" id="PF13561">
    <property type="entry name" value="adh_short_C2"/>
    <property type="match status" value="1"/>
</dbReference>
<dbReference type="PRINTS" id="PR00081">
    <property type="entry name" value="GDHRDH"/>
</dbReference>
<dbReference type="PRINTS" id="PR00080">
    <property type="entry name" value="SDRFAMILY"/>
</dbReference>
<dbReference type="SMART" id="SM00822">
    <property type="entry name" value="PKS_KR"/>
    <property type="match status" value="1"/>
</dbReference>
<dbReference type="SUPFAM" id="SSF51735">
    <property type="entry name" value="NAD(P)-binding Rossmann-fold domains"/>
    <property type="match status" value="1"/>
</dbReference>
<dbReference type="PROSITE" id="PS00061">
    <property type="entry name" value="ADH_SHORT"/>
    <property type="match status" value="1"/>
</dbReference>
<organism>
    <name type="scientific">Rhizobium sp. (strain N33)</name>
    <dbReference type="NCBI Taxonomy" id="103798"/>
    <lineage>
        <taxon>Bacteria</taxon>
        <taxon>Pseudomonadati</taxon>
        <taxon>Pseudomonadota</taxon>
        <taxon>Alphaproteobacteria</taxon>
        <taxon>Hyphomicrobiales</taxon>
        <taxon>Rhizobiaceae</taxon>
        <taxon>Rhizobium/Agrobacterium group</taxon>
        <taxon>Rhizobium</taxon>
    </lineage>
</organism>